<organism>
    <name type="scientific">Sulfurovum sp. (strain NBC37-1)</name>
    <dbReference type="NCBI Taxonomy" id="387093"/>
    <lineage>
        <taxon>Bacteria</taxon>
        <taxon>Pseudomonadati</taxon>
        <taxon>Campylobacterota</taxon>
        <taxon>Epsilonproteobacteria</taxon>
        <taxon>Campylobacterales</taxon>
        <taxon>Sulfurovaceae</taxon>
        <taxon>Sulfurovum</taxon>
    </lineage>
</organism>
<comment type="function">
    <text evidence="1">Catalyzes a salvage reaction resulting in the formation of AMP, that is energically less costly than de novo synthesis.</text>
</comment>
<comment type="catalytic activity">
    <reaction evidence="1">
        <text>AMP + diphosphate = 5-phospho-alpha-D-ribose 1-diphosphate + adenine</text>
        <dbReference type="Rhea" id="RHEA:16609"/>
        <dbReference type="ChEBI" id="CHEBI:16708"/>
        <dbReference type="ChEBI" id="CHEBI:33019"/>
        <dbReference type="ChEBI" id="CHEBI:58017"/>
        <dbReference type="ChEBI" id="CHEBI:456215"/>
        <dbReference type="EC" id="2.4.2.7"/>
    </reaction>
</comment>
<comment type="pathway">
    <text evidence="1">Purine metabolism; AMP biosynthesis via salvage pathway; AMP from adenine: step 1/1.</text>
</comment>
<comment type="subunit">
    <text evidence="1">Homodimer.</text>
</comment>
<comment type="subcellular location">
    <subcellularLocation>
        <location evidence="1">Cytoplasm</location>
    </subcellularLocation>
</comment>
<comment type="similarity">
    <text evidence="1">Belongs to the purine/pyrimidine phosphoribosyltransferase family.</text>
</comment>
<gene>
    <name evidence="1" type="primary">apt</name>
    <name type="ordered locus">SUN_0659</name>
</gene>
<feature type="chain" id="PRO_0000321415" description="Adenine phosphoribosyltransferase">
    <location>
        <begin position="1"/>
        <end position="186"/>
    </location>
</feature>
<name>APT_SULNB</name>
<accession>A6Q809</accession>
<reference key="1">
    <citation type="journal article" date="2007" name="Proc. Natl. Acad. Sci. U.S.A.">
        <title>Deep-sea vent epsilon-proteobacterial genomes provide insights into emergence of pathogens.</title>
        <authorList>
            <person name="Nakagawa S."/>
            <person name="Takaki Y."/>
            <person name="Shimamura S."/>
            <person name="Reysenbach A.-L."/>
            <person name="Takai K."/>
            <person name="Horikoshi K."/>
        </authorList>
    </citation>
    <scope>NUCLEOTIDE SEQUENCE [LARGE SCALE GENOMIC DNA]</scope>
    <source>
        <strain>NBC37-1</strain>
    </source>
</reference>
<sequence>MTLTPEDRTIILDSIRDIPDFPKPGIVFKDITTLLNNPKALSTLMDHLTERYLGYDLDYIAGIDARGFIFGSILADRLGVGFVPVRKKGKLPYTTVAEKYSLEYGFDEVEIHIDAFGENGCCSTGERSKVLLIDDLIATGGTAKAAANLIDKVGAHCVEACFIMELGFLNSKEGFSAPVYSVLEID</sequence>
<proteinExistence type="inferred from homology"/>
<protein>
    <recommendedName>
        <fullName evidence="1">Adenine phosphoribosyltransferase</fullName>
        <shortName evidence="1">APRT</shortName>
        <ecNumber evidence="1">2.4.2.7</ecNumber>
    </recommendedName>
</protein>
<evidence type="ECO:0000255" key="1">
    <source>
        <dbReference type="HAMAP-Rule" id="MF_00004"/>
    </source>
</evidence>
<dbReference type="EC" id="2.4.2.7" evidence="1"/>
<dbReference type="EMBL" id="AP009179">
    <property type="protein sequence ID" value="BAF71618.1"/>
    <property type="molecule type" value="Genomic_DNA"/>
</dbReference>
<dbReference type="RefSeq" id="WP_011980351.1">
    <property type="nucleotide sequence ID" value="NC_009663.1"/>
</dbReference>
<dbReference type="SMR" id="A6Q809"/>
<dbReference type="STRING" id="387093.SUN_0659"/>
<dbReference type="KEGG" id="sun:SUN_0659"/>
<dbReference type="eggNOG" id="COG0503">
    <property type="taxonomic scope" value="Bacteria"/>
</dbReference>
<dbReference type="HOGENOM" id="CLU_063339_3_0_7"/>
<dbReference type="OrthoDB" id="9803963at2"/>
<dbReference type="UniPathway" id="UPA00588">
    <property type="reaction ID" value="UER00646"/>
</dbReference>
<dbReference type="Proteomes" id="UP000006378">
    <property type="component" value="Chromosome"/>
</dbReference>
<dbReference type="GO" id="GO:0005737">
    <property type="term" value="C:cytoplasm"/>
    <property type="evidence" value="ECO:0007669"/>
    <property type="project" value="UniProtKB-SubCell"/>
</dbReference>
<dbReference type="GO" id="GO:0002055">
    <property type="term" value="F:adenine binding"/>
    <property type="evidence" value="ECO:0007669"/>
    <property type="project" value="TreeGrafter"/>
</dbReference>
<dbReference type="GO" id="GO:0003999">
    <property type="term" value="F:adenine phosphoribosyltransferase activity"/>
    <property type="evidence" value="ECO:0007669"/>
    <property type="project" value="UniProtKB-UniRule"/>
</dbReference>
<dbReference type="GO" id="GO:0016208">
    <property type="term" value="F:AMP binding"/>
    <property type="evidence" value="ECO:0007669"/>
    <property type="project" value="TreeGrafter"/>
</dbReference>
<dbReference type="GO" id="GO:0006168">
    <property type="term" value="P:adenine salvage"/>
    <property type="evidence" value="ECO:0007669"/>
    <property type="project" value="InterPro"/>
</dbReference>
<dbReference type="GO" id="GO:0044209">
    <property type="term" value="P:AMP salvage"/>
    <property type="evidence" value="ECO:0007669"/>
    <property type="project" value="UniProtKB-UniRule"/>
</dbReference>
<dbReference type="GO" id="GO:0006166">
    <property type="term" value="P:purine ribonucleoside salvage"/>
    <property type="evidence" value="ECO:0007669"/>
    <property type="project" value="UniProtKB-KW"/>
</dbReference>
<dbReference type="CDD" id="cd06223">
    <property type="entry name" value="PRTases_typeI"/>
    <property type="match status" value="1"/>
</dbReference>
<dbReference type="FunFam" id="3.40.50.2020:FF:000021">
    <property type="entry name" value="Adenine phosphoribosyltransferase"/>
    <property type="match status" value="1"/>
</dbReference>
<dbReference type="Gene3D" id="3.40.50.2020">
    <property type="match status" value="1"/>
</dbReference>
<dbReference type="HAMAP" id="MF_00004">
    <property type="entry name" value="Aden_phosphoribosyltr"/>
    <property type="match status" value="1"/>
</dbReference>
<dbReference type="InterPro" id="IPR005764">
    <property type="entry name" value="Ade_phspho_trans"/>
</dbReference>
<dbReference type="InterPro" id="IPR000836">
    <property type="entry name" value="PRibTrfase_dom"/>
</dbReference>
<dbReference type="InterPro" id="IPR029057">
    <property type="entry name" value="PRTase-like"/>
</dbReference>
<dbReference type="InterPro" id="IPR050054">
    <property type="entry name" value="UPRTase/APRTase"/>
</dbReference>
<dbReference type="NCBIfam" id="TIGR01090">
    <property type="entry name" value="apt"/>
    <property type="match status" value="1"/>
</dbReference>
<dbReference type="NCBIfam" id="NF002634">
    <property type="entry name" value="PRK02304.1-3"/>
    <property type="match status" value="1"/>
</dbReference>
<dbReference type="NCBIfam" id="NF002636">
    <property type="entry name" value="PRK02304.1-5"/>
    <property type="match status" value="1"/>
</dbReference>
<dbReference type="PANTHER" id="PTHR32315">
    <property type="entry name" value="ADENINE PHOSPHORIBOSYLTRANSFERASE"/>
    <property type="match status" value="1"/>
</dbReference>
<dbReference type="PANTHER" id="PTHR32315:SF3">
    <property type="entry name" value="ADENINE PHOSPHORIBOSYLTRANSFERASE"/>
    <property type="match status" value="1"/>
</dbReference>
<dbReference type="Pfam" id="PF00156">
    <property type="entry name" value="Pribosyltran"/>
    <property type="match status" value="1"/>
</dbReference>
<dbReference type="SUPFAM" id="SSF53271">
    <property type="entry name" value="PRTase-like"/>
    <property type="match status" value="1"/>
</dbReference>
<dbReference type="PROSITE" id="PS00103">
    <property type="entry name" value="PUR_PYR_PR_TRANSFER"/>
    <property type="match status" value="1"/>
</dbReference>
<keyword id="KW-0963">Cytoplasm</keyword>
<keyword id="KW-0328">Glycosyltransferase</keyword>
<keyword id="KW-0660">Purine salvage</keyword>
<keyword id="KW-0808">Transferase</keyword>